<gene>
    <name evidence="1" type="primary">napA</name>
    <name type="ordered locus">ECIAI39_2344</name>
</gene>
<proteinExistence type="inferred from homology"/>
<comment type="function">
    <text evidence="1">Catalytic subunit of the periplasmic nitrate reductase complex NapAB. Receives electrons from NapB and catalyzes the reduction of nitrate to nitrite.</text>
</comment>
<comment type="catalytic activity">
    <reaction evidence="1">
        <text>2 Fe(II)-[cytochrome] + nitrate + 2 H(+) = 2 Fe(III)-[cytochrome] + nitrite + H2O</text>
        <dbReference type="Rhea" id="RHEA:12909"/>
        <dbReference type="Rhea" id="RHEA-COMP:11777"/>
        <dbReference type="Rhea" id="RHEA-COMP:11778"/>
        <dbReference type="ChEBI" id="CHEBI:15377"/>
        <dbReference type="ChEBI" id="CHEBI:15378"/>
        <dbReference type="ChEBI" id="CHEBI:16301"/>
        <dbReference type="ChEBI" id="CHEBI:17632"/>
        <dbReference type="ChEBI" id="CHEBI:29033"/>
        <dbReference type="ChEBI" id="CHEBI:29034"/>
        <dbReference type="EC" id="1.9.6.1"/>
    </reaction>
</comment>
<comment type="cofactor">
    <cofactor evidence="1">
        <name>[4Fe-4S] cluster</name>
        <dbReference type="ChEBI" id="CHEBI:49883"/>
    </cofactor>
    <text evidence="1">Binds 1 [4Fe-4S] cluster.</text>
</comment>
<comment type="cofactor">
    <cofactor evidence="1">
        <name>Mo-bis(molybdopterin guanine dinucleotide)</name>
        <dbReference type="ChEBI" id="CHEBI:60539"/>
    </cofactor>
    <text evidence="1">Binds 1 molybdenum-bis(molybdopterin guanine dinucleotide) (Mo-bis-MGD) cofactor per subunit.</text>
</comment>
<comment type="subunit">
    <text evidence="1">Component of the periplasmic nitrate reductase NapAB complex composed of NapA and NapB.</text>
</comment>
<comment type="subcellular location">
    <subcellularLocation>
        <location evidence="1">Periplasm</location>
    </subcellularLocation>
</comment>
<comment type="PTM">
    <text evidence="1">Predicted to be exported by the Tat system. The position of the signal peptide cleavage has not been experimentally proven.</text>
</comment>
<comment type="similarity">
    <text evidence="1">Belongs to the prokaryotic molybdopterin-containing oxidoreductase family. NasA/NapA/NarB subfamily.</text>
</comment>
<evidence type="ECO:0000255" key="1">
    <source>
        <dbReference type="HAMAP-Rule" id="MF_01630"/>
    </source>
</evidence>
<dbReference type="EC" id="1.9.6.1" evidence="1"/>
<dbReference type="EMBL" id="CU928164">
    <property type="protein sequence ID" value="CAR18470.1"/>
    <property type="molecule type" value="Genomic_DNA"/>
</dbReference>
<dbReference type="RefSeq" id="WP_000778068.1">
    <property type="nucleotide sequence ID" value="NC_011750.1"/>
</dbReference>
<dbReference type="RefSeq" id="YP_002408304.1">
    <property type="nucleotide sequence ID" value="NC_011750.1"/>
</dbReference>
<dbReference type="SMR" id="B7NN18"/>
<dbReference type="STRING" id="585057.ECIAI39_2344"/>
<dbReference type="KEGG" id="ect:ECIAI39_2344"/>
<dbReference type="PATRIC" id="fig|585057.6.peg.2443"/>
<dbReference type="HOGENOM" id="CLU_000422_13_4_6"/>
<dbReference type="Proteomes" id="UP000000749">
    <property type="component" value="Chromosome"/>
</dbReference>
<dbReference type="GO" id="GO:0016020">
    <property type="term" value="C:membrane"/>
    <property type="evidence" value="ECO:0007669"/>
    <property type="project" value="TreeGrafter"/>
</dbReference>
<dbReference type="GO" id="GO:0009325">
    <property type="term" value="C:nitrate reductase complex"/>
    <property type="evidence" value="ECO:0007669"/>
    <property type="project" value="TreeGrafter"/>
</dbReference>
<dbReference type="GO" id="GO:0042597">
    <property type="term" value="C:periplasmic space"/>
    <property type="evidence" value="ECO:0007669"/>
    <property type="project" value="UniProtKB-SubCell"/>
</dbReference>
<dbReference type="GO" id="GO:0051539">
    <property type="term" value="F:4 iron, 4 sulfur cluster binding"/>
    <property type="evidence" value="ECO:0007669"/>
    <property type="project" value="UniProtKB-KW"/>
</dbReference>
<dbReference type="GO" id="GO:0009055">
    <property type="term" value="F:electron transfer activity"/>
    <property type="evidence" value="ECO:0007669"/>
    <property type="project" value="UniProtKB-UniRule"/>
</dbReference>
<dbReference type="GO" id="GO:0005506">
    <property type="term" value="F:iron ion binding"/>
    <property type="evidence" value="ECO:0007669"/>
    <property type="project" value="UniProtKB-UniRule"/>
</dbReference>
<dbReference type="GO" id="GO:0030151">
    <property type="term" value="F:molybdenum ion binding"/>
    <property type="evidence" value="ECO:0007669"/>
    <property type="project" value="InterPro"/>
</dbReference>
<dbReference type="GO" id="GO:0043546">
    <property type="term" value="F:molybdopterin cofactor binding"/>
    <property type="evidence" value="ECO:0007669"/>
    <property type="project" value="InterPro"/>
</dbReference>
<dbReference type="GO" id="GO:0050140">
    <property type="term" value="F:nitrate reductase (cytochrome) activity"/>
    <property type="evidence" value="ECO:0007669"/>
    <property type="project" value="UniProtKB-EC"/>
</dbReference>
<dbReference type="GO" id="GO:0045333">
    <property type="term" value="P:cellular respiration"/>
    <property type="evidence" value="ECO:0007669"/>
    <property type="project" value="UniProtKB-ARBA"/>
</dbReference>
<dbReference type="GO" id="GO:0006777">
    <property type="term" value="P:Mo-molybdopterin cofactor biosynthetic process"/>
    <property type="evidence" value="ECO:0007669"/>
    <property type="project" value="UniProtKB-UniRule"/>
</dbReference>
<dbReference type="GO" id="GO:0042128">
    <property type="term" value="P:nitrate assimilation"/>
    <property type="evidence" value="ECO:0007669"/>
    <property type="project" value="UniProtKB-UniRule"/>
</dbReference>
<dbReference type="CDD" id="cd02791">
    <property type="entry name" value="MopB_CT_Nitrate-R-NapA-like"/>
    <property type="match status" value="1"/>
</dbReference>
<dbReference type="CDD" id="cd02754">
    <property type="entry name" value="MopB_Nitrate-R-NapA-like"/>
    <property type="match status" value="1"/>
</dbReference>
<dbReference type="FunFam" id="2.40.40.20:FF:000005">
    <property type="entry name" value="Periplasmic nitrate reductase"/>
    <property type="match status" value="1"/>
</dbReference>
<dbReference type="FunFam" id="3.40.228.10:FF:000001">
    <property type="entry name" value="Periplasmic nitrate reductase"/>
    <property type="match status" value="1"/>
</dbReference>
<dbReference type="Gene3D" id="2.40.40.20">
    <property type="match status" value="1"/>
</dbReference>
<dbReference type="Gene3D" id="3.30.200.210">
    <property type="match status" value="1"/>
</dbReference>
<dbReference type="Gene3D" id="3.40.50.740">
    <property type="match status" value="1"/>
</dbReference>
<dbReference type="Gene3D" id="3.40.228.10">
    <property type="entry name" value="Dimethylsulfoxide Reductase, domain 2"/>
    <property type="match status" value="1"/>
</dbReference>
<dbReference type="HAMAP" id="MF_01630">
    <property type="entry name" value="Nitrate_reduct_NapA"/>
    <property type="match status" value="1"/>
</dbReference>
<dbReference type="InterPro" id="IPR009010">
    <property type="entry name" value="Asp_de-COase-like_dom_sf"/>
</dbReference>
<dbReference type="InterPro" id="IPR041957">
    <property type="entry name" value="CT_Nitrate-R-NapA-like"/>
</dbReference>
<dbReference type="InterPro" id="IPR006657">
    <property type="entry name" value="MoPterin_dinucl-bd_dom"/>
</dbReference>
<dbReference type="InterPro" id="IPR006656">
    <property type="entry name" value="Mopterin_OxRdtase"/>
</dbReference>
<dbReference type="InterPro" id="IPR006963">
    <property type="entry name" value="Mopterin_OxRdtase_4Fe-4S_dom"/>
</dbReference>
<dbReference type="InterPro" id="IPR027467">
    <property type="entry name" value="MopterinOxRdtase_cofactor_BS"/>
</dbReference>
<dbReference type="InterPro" id="IPR010051">
    <property type="entry name" value="Periplasm_NO3_reductase_lsu"/>
</dbReference>
<dbReference type="InterPro" id="IPR050123">
    <property type="entry name" value="Prok_molybdopt-oxidoreductase"/>
</dbReference>
<dbReference type="InterPro" id="IPR006311">
    <property type="entry name" value="TAT_signal"/>
</dbReference>
<dbReference type="InterPro" id="IPR019546">
    <property type="entry name" value="TAT_signal_bac_arc"/>
</dbReference>
<dbReference type="NCBIfam" id="TIGR01706">
    <property type="entry name" value="NAPA"/>
    <property type="match status" value="1"/>
</dbReference>
<dbReference type="NCBIfam" id="NF010055">
    <property type="entry name" value="PRK13532.1"/>
    <property type="match status" value="1"/>
</dbReference>
<dbReference type="NCBIfam" id="TIGR01409">
    <property type="entry name" value="TAT_signal_seq"/>
    <property type="match status" value="1"/>
</dbReference>
<dbReference type="PANTHER" id="PTHR43105:SF11">
    <property type="entry name" value="PERIPLASMIC NITRATE REDUCTASE"/>
    <property type="match status" value="1"/>
</dbReference>
<dbReference type="PANTHER" id="PTHR43105">
    <property type="entry name" value="RESPIRATORY NITRATE REDUCTASE"/>
    <property type="match status" value="1"/>
</dbReference>
<dbReference type="Pfam" id="PF04879">
    <property type="entry name" value="Molybdop_Fe4S4"/>
    <property type="match status" value="1"/>
</dbReference>
<dbReference type="Pfam" id="PF00384">
    <property type="entry name" value="Molybdopterin"/>
    <property type="match status" value="1"/>
</dbReference>
<dbReference type="Pfam" id="PF01568">
    <property type="entry name" value="Molydop_binding"/>
    <property type="match status" value="1"/>
</dbReference>
<dbReference type="SMART" id="SM00926">
    <property type="entry name" value="Molybdop_Fe4S4"/>
    <property type="match status" value="1"/>
</dbReference>
<dbReference type="SUPFAM" id="SSF50692">
    <property type="entry name" value="ADC-like"/>
    <property type="match status" value="1"/>
</dbReference>
<dbReference type="SUPFAM" id="SSF53706">
    <property type="entry name" value="Formate dehydrogenase/DMSO reductase, domains 1-3"/>
    <property type="match status" value="1"/>
</dbReference>
<dbReference type="PROSITE" id="PS51669">
    <property type="entry name" value="4FE4S_MOW_BIS_MGD"/>
    <property type="match status" value="1"/>
</dbReference>
<dbReference type="PROSITE" id="PS00551">
    <property type="entry name" value="MOLYBDOPTERIN_PROK_1"/>
    <property type="match status" value="1"/>
</dbReference>
<dbReference type="PROSITE" id="PS51318">
    <property type="entry name" value="TAT"/>
    <property type="match status" value="1"/>
</dbReference>
<sequence length="828" mass="93116">MKLSRRSFMKANAVAAAAAAAGLSVPGVARAVVGQQEAIKWDKAPCRFCGTGCGVLVGTQQGRVVACQGDPDAPVNRGLNCIKGYFLPKIMYGKDRLTQPLLRMKNGKYDKEGEFTPITWDQAFDVMEEKFKTALKEKGPESIGMFGSGQWTIWEGYAASKLFKAGFRSNNIDPNARHCMASAVVGFMRTFGMDEPMGCYDDIEQADAFVLWGANMAEMHPILWSRITNRRLSNQNVTVAVLSTYQHRSFELADNGIIFTPQSDLVILNYIANYIIQNNAINQDFFSKHVNLRKGATDIGYGLRPTHPLEKAAKNPGSDASEPMSFEDYKAFVAEYTLEKTAEMTGVPKDQLEQLAQLYADPNKKVISYWTMGFNQHTRGVWANNLVYNLHLLTGKISQPGCGPFSLTGQPSACGTAREVGTFAHRLPADMVVTNEKHRDICEKKWNIPSGTIPAKIGLHAVAQDRALKDGKLNVYWTMCTNNMQAGPNINEERMPGWRDPRNFIIVSDPYPTVSALAADLILPTAMWVEKEGAYGNAERRTQFWRQQVQAPGEAKSDLWQLVQFSRRFKTEEVWPEELLAKKPELRGKTLYEVLYATPEVSKFPVSELAEDQLNDESRELGFYLQKGLFEEYAWFGRGHGHDLAPFDDYHKARGLRWPVVNGKETQWRYSEGNDPYVKMGEGYKFYGKPDGKAVIFALPFEPAAEAPDEEYDLWLSTGRVLEHWHTGSMTRRVPELHRAFPEAVLFIHPLDAKARDLRRGDKVKVVSRRGEVISIVETRGRNRPPQGLVYMPFFDAAQLVNKLTLDATDPLSKETDFKKCAVKLEKV</sequence>
<organism>
    <name type="scientific">Escherichia coli O7:K1 (strain IAI39 / ExPEC)</name>
    <dbReference type="NCBI Taxonomy" id="585057"/>
    <lineage>
        <taxon>Bacteria</taxon>
        <taxon>Pseudomonadati</taxon>
        <taxon>Pseudomonadota</taxon>
        <taxon>Gammaproteobacteria</taxon>
        <taxon>Enterobacterales</taxon>
        <taxon>Enterobacteriaceae</taxon>
        <taxon>Escherichia</taxon>
    </lineage>
</organism>
<protein>
    <recommendedName>
        <fullName evidence="1">Periplasmic nitrate reductase</fullName>
        <ecNumber evidence="1">1.9.6.1</ecNumber>
    </recommendedName>
</protein>
<feature type="signal peptide" description="Tat-type signal" evidence="1">
    <location>
        <begin position="1"/>
        <end position="31"/>
    </location>
</feature>
<feature type="chain" id="PRO_1000186357" description="Periplasmic nitrate reductase" evidence="1">
    <location>
        <begin position="32"/>
        <end position="828"/>
    </location>
</feature>
<feature type="domain" description="4Fe-4S Mo/W bis-MGD-type" evidence="1">
    <location>
        <begin position="39"/>
        <end position="95"/>
    </location>
</feature>
<feature type="binding site" evidence="1">
    <location>
        <position position="46"/>
    </location>
    <ligand>
        <name>[4Fe-4S] cluster</name>
        <dbReference type="ChEBI" id="CHEBI:49883"/>
    </ligand>
</feature>
<feature type="binding site" evidence="1">
    <location>
        <position position="49"/>
    </location>
    <ligand>
        <name>[4Fe-4S] cluster</name>
        <dbReference type="ChEBI" id="CHEBI:49883"/>
    </ligand>
</feature>
<feature type="binding site" evidence="1">
    <location>
        <position position="53"/>
    </location>
    <ligand>
        <name>[4Fe-4S] cluster</name>
        <dbReference type="ChEBI" id="CHEBI:49883"/>
    </ligand>
</feature>
<feature type="binding site" evidence="1">
    <location>
        <position position="81"/>
    </location>
    <ligand>
        <name>[4Fe-4S] cluster</name>
        <dbReference type="ChEBI" id="CHEBI:49883"/>
    </ligand>
</feature>
<feature type="binding site" evidence="1">
    <location>
        <position position="83"/>
    </location>
    <ligand>
        <name>Mo-bis(molybdopterin guanine dinucleotide)</name>
        <dbReference type="ChEBI" id="CHEBI:60539"/>
    </ligand>
</feature>
<feature type="binding site" evidence="1">
    <location>
        <position position="150"/>
    </location>
    <ligand>
        <name>Mo-bis(molybdopterin guanine dinucleotide)</name>
        <dbReference type="ChEBI" id="CHEBI:60539"/>
    </ligand>
</feature>
<feature type="binding site" evidence="1">
    <location>
        <position position="175"/>
    </location>
    <ligand>
        <name>Mo-bis(molybdopterin guanine dinucleotide)</name>
        <dbReference type="ChEBI" id="CHEBI:60539"/>
    </ligand>
</feature>
<feature type="binding site" evidence="1">
    <location>
        <position position="179"/>
    </location>
    <ligand>
        <name>Mo-bis(molybdopterin guanine dinucleotide)</name>
        <dbReference type="ChEBI" id="CHEBI:60539"/>
    </ligand>
</feature>
<feature type="binding site" evidence="1">
    <location>
        <begin position="212"/>
        <end position="219"/>
    </location>
    <ligand>
        <name>Mo-bis(molybdopterin guanine dinucleotide)</name>
        <dbReference type="ChEBI" id="CHEBI:60539"/>
    </ligand>
</feature>
<feature type="binding site" evidence="1">
    <location>
        <begin position="243"/>
        <end position="247"/>
    </location>
    <ligand>
        <name>Mo-bis(molybdopterin guanine dinucleotide)</name>
        <dbReference type="ChEBI" id="CHEBI:60539"/>
    </ligand>
</feature>
<feature type="binding site" evidence="1">
    <location>
        <begin position="262"/>
        <end position="264"/>
    </location>
    <ligand>
        <name>Mo-bis(molybdopterin guanine dinucleotide)</name>
        <dbReference type="ChEBI" id="CHEBI:60539"/>
    </ligand>
</feature>
<feature type="binding site" evidence="1">
    <location>
        <position position="372"/>
    </location>
    <ligand>
        <name>Mo-bis(molybdopterin guanine dinucleotide)</name>
        <dbReference type="ChEBI" id="CHEBI:60539"/>
    </ligand>
</feature>
<feature type="binding site" evidence="1">
    <location>
        <position position="376"/>
    </location>
    <ligand>
        <name>Mo-bis(molybdopterin guanine dinucleotide)</name>
        <dbReference type="ChEBI" id="CHEBI:60539"/>
    </ligand>
</feature>
<feature type="binding site" evidence="1">
    <location>
        <position position="482"/>
    </location>
    <ligand>
        <name>Mo-bis(molybdopterin guanine dinucleotide)</name>
        <dbReference type="ChEBI" id="CHEBI:60539"/>
    </ligand>
</feature>
<feature type="binding site" evidence="1">
    <location>
        <begin position="508"/>
        <end position="509"/>
    </location>
    <ligand>
        <name>Mo-bis(molybdopterin guanine dinucleotide)</name>
        <dbReference type="ChEBI" id="CHEBI:60539"/>
    </ligand>
</feature>
<feature type="binding site" evidence="1">
    <location>
        <position position="531"/>
    </location>
    <ligand>
        <name>Mo-bis(molybdopterin guanine dinucleotide)</name>
        <dbReference type="ChEBI" id="CHEBI:60539"/>
    </ligand>
</feature>
<feature type="binding site" evidence="1">
    <location>
        <position position="558"/>
    </location>
    <ligand>
        <name>Mo-bis(molybdopterin guanine dinucleotide)</name>
        <dbReference type="ChEBI" id="CHEBI:60539"/>
    </ligand>
</feature>
<feature type="binding site" evidence="1">
    <location>
        <begin position="718"/>
        <end position="727"/>
    </location>
    <ligand>
        <name>Mo-bis(molybdopterin guanine dinucleotide)</name>
        <dbReference type="ChEBI" id="CHEBI:60539"/>
    </ligand>
</feature>
<feature type="binding site" evidence="1">
    <location>
        <position position="794"/>
    </location>
    <ligand>
        <name>substrate</name>
    </ligand>
</feature>
<feature type="binding site" evidence="1">
    <location>
        <position position="802"/>
    </location>
    <ligand>
        <name>Mo-bis(molybdopterin guanine dinucleotide)</name>
        <dbReference type="ChEBI" id="CHEBI:60539"/>
    </ligand>
</feature>
<feature type="binding site" evidence="1">
    <location>
        <position position="819"/>
    </location>
    <ligand>
        <name>Mo-bis(molybdopterin guanine dinucleotide)</name>
        <dbReference type="ChEBI" id="CHEBI:60539"/>
    </ligand>
</feature>
<reference key="1">
    <citation type="journal article" date="2009" name="PLoS Genet.">
        <title>Organised genome dynamics in the Escherichia coli species results in highly diverse adaptive paths.</title>
        <authorList>
            <person name="Touchon M."/>
            <person name="Hoede C."/>
            <person name="Tenaillon O."/>
            <person name="Barbe V."/>
            <person name="Baeriswyl S."/>
            <person name="Bidet P."/>
            <person name="Bingen E."/>
            <person name="Bonacorsi S."/>
            <person name="Bouchier C."/>
            <person name="Bouvet O."/>
            <person name="Calteau A."/>
            <person name="Chiapello H."/>
            <person name="Clermont O."/>
            <person name="Cruveiller S."/>
            <person name="Danchin A."/>
            <person name="Diard M."/>
            <person name="Dossat C."/>
            <person name="Karoui M.E."/>
            <person name="Frapy E."/>
            <person name="Garry L."/>
            <person name="Ghigo J.M."/>
            <person name="Gilles A.M."/>
            <person name="Johnson J."/>
            <person name="Le Bouguenec C."/>
            <person name="Lescat M."/>
            <person name="Mangenot S."/>
            <person name="Martinez-Jehanne V."/>
            <person name="Matic I."/>
            <person name="Nassif X."/>
            <person name="Oztas S."/>
            <person name="Petit M.A."/>
            <person name="Pichon C."/>
            <person name="Rouy Z."/>
            <person name="Ruf C.S."/>
            <person name="Schneider D."/>
            <person name="Tourret J."/>
            <person name="Vacherie B."/>
            <person name="Vallenet D."/>
            <person name="Medigue C."/>
            <person name="Rocha E.P.C."/>
            <person name="Denamur E."/>
        </authorList>
    </citation>
    <scope>NUCLEOTIDE SEQUENCE [LARGE SCALE GENOMIC DNA]</scope>
    <source>
        <strain>IAI39 / ExPEC</strain>
    </source>
</reference>
<keyword id="KW-0004">4Fe-4S</keyword>
<keyword id="KW-0249">Electron transport</keyword>
<keyword id="KW-0408">Iron</keyword>
<keyword id="KW-0411">Iron-sulfur</keyword>
<keyword id="KW-0479">Metal-binding</keyword>
<keyword id="KW-0500">Molybdenum</keyword>
<keyword id="KW-0534">Nitrate assimilation</keyword>
<keyword id="KW-0560">Oxidoreductase</keyword>
<keyword id="KW-0574">Periplasm</keyword>
<keyword id="KW-0732">Signal</keyword>
<keyword id="KW-0813">Transport</keyword>
<name>NAPA_ECO7I</name>
<accession>B7NN18</accession>